<gene>
    <name type="primary">ets2-b</name>
</gene>
<keyword id="KW-0238">DNA-binding</keyword>
<keyword id="KW-0539">Nucleus</keyword>
<keyword id="KW-1185">Reference proteome</keyword>
<keyword id="KW-0804">Transcription</keyword>
<keyword id="KW-0805">Transcription regulation</keyword>
<comment type="function">
    <text evidence="1">Probable transcription factor.</text>
</comment>
<comment type="subcellular location">
    <subcellularLocation>
        <location>Nucleus</location>
    </subcellularLocation>
</comment>
<comment type="similarity">
    <text evidence="4">Belongs to the ETS family.</text>
</comment>
<sequence>MTEFGIRNMDQVAPVYNGHRGMLKRQLAFDNVQVPTSLYCGLFSAYEEEQAVPTGLDSYPHDSSSCELPLLTPCSKAVMSQALKDTFNGFAKERCRLGIPGNPWLWDENNVLQWLLWAAKEFSLENVNFQKFLMNGHELCSLGKERFLALAPDFVGDILWEHLEEMMKEYQEKAQEPYIDHSNRDSLNQWMNADSLNFTADPLQCGAQVHNYPKNGMYNDMCSVPTGQTLLNPKQEFQQYPSSCLKSRAVNYPPASQDFARSHMNVLLNSLNSGKLRDYDSGDSGTESFESTESLLHSWTSQSSLVDMQRVPSYDSFEEDGNQTLCLNKQPMSFKDYIQDRCEPAELGKPVIPASILAGFTGSGPIQLWQFLLELLTDKSCQSFISWTGDGWEFKLADPDEVARRWGKRKNKPKMNYEKLSRGLRYYYDKNIIHKTSGKRYVYRFVCDLHNLLGYTPDELHAMLGVQPDTDE</sequence>
<feature type="chain" id="PRO_0000204081" description="Protein c-ets-2-B">
    <location>
        <begin position="1"/>
        <end position="472"/>
    </location>
</feature>
<feature type="domain" description="PNT" evidence="3">
    <location>
        <begin position="85"/>
        <end position="170"/>
    </location>
</feature>
<feature type="DNA-binding region" description="ETS" evidence="2">
    <location>
        <begin position="366"/>
        <end position="446"/>
    </location>
</feature>
<accession>Q91712</accession>
<accession>Q91737</accession>
<name>ETS2B_XENLA</name>
<evidence type="ECO:0000250" key="1"/>
<evidence type="ECO:0000255" key="2">
    <source>
        <dbReference type="PROSITE-ProRule" id="PRU00237"/>
    </source>
</evidence>
<evidence type="ECO:0000255" key="3">
    <source>
        <dbReference type="PROSITE-ProRule" id="PRU00762"/>
    </source>
</evidence>
<evidence type="ECO:0000305" key="4"/>
<organism>
    <name type="scientific">Xenopus laevis</name>
    <name type="common">African clawed frog</name>
    <dbReference type="NCBI Taxonomy" id="8355"/>
    <lineage>
        <taxon>Eukaryota</taxon>
        <taxon>Metazoa</taxon>
        <taxon>Chordata</taxon>
        <taxon>Craniata</taxon>
        <taxon>Vertebrata</taxon>
        <taxon>Euteleostomi</taxon>
        <taxon>Amphibia</taxon>
        <taxon>Batrachia</taxon>
        <taxon>Anura</taxon>
        <taxon>Pipoidea</taxon>
        <taxon>Pipidae</taxon>
        <taxon>Xenopodinae</taxon>
        <taxon>Xenopus</taxon>
        <taxon>Xenopus</taxon>
    </lineage>
</organism>
<proteinExistence type="evidence at transcript level"/>
<dbReference type="EMBL" id="X52635">
    <property type="protein sequence ID" value="CAA36860.1"/>
    <property type="molecule type" value="mRNA"/>
</dbReference>
<dbReference type="EMBL" id="M81684">
    <property type="protein sequence ID" value="AAA49706.1"/>
    <property type="molecule type" value="mRNA"/>
</dbReference>
<dbReference type="PIR" id="A53236">
    <property type="entry name" value="A53236"/>
</dbReference>
<dbReference type="SMR" id="Q91712"/>
<dbReference type="AGR" id="Xenbase:XB-GENE-6252320"/>
<dbReference type="Xenbase" id="XB-GENE-6252320">
    <property type="gene designation" value="ets2.L"/>
</dbReference>
<dbReference type="Proteomes" id="UP000186698">
    <property type="component" value="Unplaced"/>
</dbReference>
<dbReference type="GO" id="GO:0005634">
    <property type="term" value="C:nucleus"/>
    <property type="evidence" value="ECO:0000318"/>
    <property type="project" value="GO_Central"/>
</dbReference>
<dbReference type="GO" id="GO:0000981">
    <property type="term" value="F:DNA-binding transcription factor activity, RNA polymerase II-specific"/>
    <property type="evidence" value="ECO:0000318"/>
    <property type="project" value="GO_Central"/>
</dbReference>
<dbReference type="GO" id="GO:0043565">
    <property type="term" value="F:sequence-specific DNA binding"/>
    <property type="evidence" value="ECO:0007669"/>
    <property type="project" value="InterPro"/>
</dbReference>
<dbReference type="GO" id="GO:0030154">
    <property type="term" value="P:cell differentiation"/>
    <property type="evidence" value="ECO:0000318"/>
    <property type="project" value="GO_Central"/>
</dbReference>
<dbReference type="GO" id="GO:0006357">
    <property type="term" value="P:regulation of transcription by RNA polymerase II"/>
    <property type="evidence" value="ECO:0000318"/>
    <property type="project" value="GO_Central"/>
</dbReference>
<dbReference type="CDD" id="cd08543">
    <property type="entry name" value="SAM_PNT-ETS-2"/>
    <property type="match status" value="1"/>
</dbReference>
<dbReference type="FunFam" id="1.10.10.10:FF:000097">
    <property type="entry name" value="Protein c-ets-1 isoform 1"/>
    <property type="match status" value="1"/>
</dbReference>
<dbReference type="FunFam" id="1.10.150.50:FF:000014">
    <property type="entry name" value="Protein c-ets-1 isoform 1"/>
    <property type="match status" value="1"/>
</dbReference>
<dbReference type="Gene3D" id="1.10.150.50">
    <property type="entry name" value="Transcription Factor, Ets-1"/>
    <property type="match status" value="1"/>
</dbReference>
<dbReference type="Gene3D" id="1.10.10.10">
    <property type="entry name" value="Winged helix-like DNA-binding domain superfamily/Winged helix DNA-binding domain"/>
    <property type="match status" value="1"/>
</dbReference>
<dbReference type="InterPro" id="IPR045688">
    <property type="entry name" value="Ets1_N_flank"/>
</dbReference>
<dbReference type="InterPro" id="IPR000418">
    <property type="entry name" value="Ets_dom"/>
</dbReference>
<dbReference type="InterPro" id="IPR046328">
    <property type="entry name" value="ETS_fam"/>
</dbReference>
<dbReference type="InterPro" id="IPR003118">
    <property type="entry name" value="Pointed_dom"/>
</dbReference>
<dbReference type="InterPro" id="IPR013761">
    <property type="entry name" value="SAM/pointed_sf"/>
</dbReference>
<dbReference type="InterPro" id="IPR016311">
    <property type="entry name" value="Transform_prot_C-ets"/>
</dbReference>
<dbReference type="InterPro" id="IPR027276">
    <property type="entry name" value="Transform_prot_C-ets-2"/>
</dbReference>
<dbReference type="InterPro" id="IPR036388">
    <property type="entry name" value="WH-like_DNA-bd_sf"/>
</dbReference>
<dbReference type="InterPro" id="IPR036390">
    <property type="entry name" value="WH_DNA-bd_sf"/>
</dbReference>
<dbReference type="PANTHER" id="PTHR11849">
    <property type="entry name" value="ETS"/>
    <property type="match status" value="1"/>
</dbReference>
<dbReference type="PANTHER" id="PTHR11849:SF188">
    <property type="entry name" value="PROTEIN C-ETS-2"/>
    <property type="match status" value="1"/>
</dbReference>
<dbReference type="Pfam" id="PF00178">
    <property type="entry name" value="Ets"/>
    <property type="match status" value="1"/>
</dbReference>
<dbReference type="Pfam" id="PF19525">
    <property type="entry name" value="Ets1_N_flank"/>
    <property type="match status" value="1"/>
</dbReference>
<dbReference type="Pfam" id="PF02198">
    <property type="entry name" value="SAM_PNT"/>
    <property type="match status" value="1"/>
</dbReference>
<dbReference type="PIRSF" id="PIRSF501032">
    <property type="entry name" value="C-ets-2"/>
    <property type="match status" value="1"/>
</dbReference>
<dbReference type="PIRSF" id="PIRSF001698">
    <property type="entry name" value="Transforming_factor_C-ets"/>
    <property type="match status" value="1"/>
</dbReference>
<dbReference type="PRINTS" id="PR00454">
    <property type="entry name" value="ETSDOMAIN"/>
</dbReference>
<dbReference type="SMART" id="SM00413">
    <property type="entry name" value="ETS"/>
    <property type="match status" value="1"/>
</dbReference>
<dbReference type="SMART" id="SM00251">
    <property type="entry name" value="SAM_PNT"/>
    <property type="match status" value="1"/>
</dbReference>
<dbReference type="SUPFAM" id="SSF47769">
    <property type="entry name" value="SAM/Pointed domain"/>
    <property type="match status" value="1"/>
</dbReference>
<dbReference type="SUPFAM" id="SSF46785">
    <property type="entry name" value="Winged helix' DNA-binding domain"/>
    <property type="match status" value="1"/>
</dbReference>
<dbReference type="PROSITE" id="PS00345">
    <property type="entry name" value="ETS_DOMAIN_1"/>
    <property type="match status" value="1"/>
</dbReference>
<dbReference type="PROSITE" id="PS00346">
    <property type="entry name" value="ETS_DOMAIN_2"/>
    <property type="match status" value="1"/>
</dbReference>
<dbReference type="PROSITE" id="PS50061">
    <property type="entry name" value="ETS_DOMAIN_3"/>
    <property type="match status" value="1"/>
</dbReference>
<dbReference type="PROSITE" id="PS51433">
    <property type="entry name" value="PNT"/>
    <property type="match status" value="1"/>
</dbReference>
<protein>
    <recommendedName>
        <fullName>Protein c-ets-2-B</fullName>
        <shortName>C-ets-2B</shortName>
    </recommendedName>
</protein>
<reference key="1">
    <citation type="journal article" date="1990" name="Nucleic Acids Res.">
        <title>Isolation of two different c-ets-2 proto-oncogenes in Xenopus laevis.</title>
        <authorList>
            <person name="Wolff C.M."/>
            <person name="Stiegler P."/>
            <person name="Baltzinger M."/>
            <person name="Meyer D."/>
            <person name="Ghysdael J."/>
            <person name="Stehelin D."/>
            <person name="Befort N."/>
            <person name="Remy P."/>
        </authorList>
    </citation>
    <scope>NUCLEOTIDE SEQUENCE [MRNA]</scope>
    <source>
        <tissue>Ovary</tissue>
    </source>
</reference>
<reference key="2">
    <citation type="journal article" date="1991" name="Cell Growth Differ.">
        <title>Cloning, sequencing, and expression of two Xenopus laevis c-ets-2 protooncogenes.</title>
        <authorList>
            <person name="Wolff C.M."/>
            <person name="Stiegler P."/>
            <person name="Baltzinger M."/>
            <person name="Meyer D."/>
            <person name="Ghysdael J."/>
            <person name="Stehelin D."/>
            <person name="Befort N."/>
            <person name="Remy P."/>
        </authorList>
    </citation>
    <scope>NUCLEOTIDE SEQUENCE [MRNA]</scope>
    <source>
        <tissue>Ovary</tissue>
    </source>
</reference>
<reference key="3">
    <citation type="journal article" date="1992" name="Nucleic Acids Res.">
        <title>Characterization of the cDNA sequences of two Xenopus ets-2 proto-oncogenes.</title>
        <authorList>
            <person name="Burdett L.A."/>
            <person name="Qi S.M."/>
            <person name="Chen Z.-Q."/>
            <person name="Lautenberger J.A."/>
            <person name="Papas T.S."/>
        </authorList>
    </citation>
    <scope>NUCLEOTIDE SEQUENCE [MRNA] OF 1-146</scope>
</reference>